<name>ATPF2_RHOP2</name>
<accession>Q2IRA4</accession>
<gene>
    <name type="primary">atpF2</name>
    <name type="synonym">atpG</name>
    <name type="ordered locus">RPB_4573</name>
</gene>
<sequence length="185" mass="19105">MAEGHGDAKGATAHTAADGGHKAPFPPFQKETFASQLVSLTIAFVALYLIVSKLALPRVGGVIEERQKTIDGDLAAAQKLKGESDDALKAYEAELAAARTRAQAIGAETREKLNAAAEAERKTLEERLSAKLADAEKTIAATRTAAMGNVRGIASEAAAAIVQQLAGVQPDSKALDSAVNASIKG</sequence>
<protein>
    <recommendedName>
        <fullName>ATP synthase subunit b 2</fullName>
    </recommendedName>
    <alternativeName>
        <fullName>ATP synthase F(0) sector subunit b 2</fullName>
    </alternativeName>
    <alternativeName>
        <fullName>ATPase subunit I 2</fullName>
    </alternativeName>
    <alternativeName>
        <fullName>F-type ATPase subunit b 2</fullName>
        <shortName>F-ATPase subunit b 2</shortName>
    </alternativeName>
</protein>
<reference key="1">
    <citation type="submission" date="2006-01" db="EMBL/GenBank/DDBJ databases">
        <title>Complete sequence of Rhodopseudomonas palustris HaA2.</title>
        <authorList>
            <consortium name="US DOE Joint Genome Institute"/>
            <person name="Copeland A."/>
            <person name="Lucas S."/>
            <person name="Lapidus A."/>
            <person name="Barry K."/>
            <person name="Detter J.C."/>
            <person name="Glavina T."/>
            <person name="Hammon N."/>
            <person name="Israni S."/>
            <person name="Pitluck S."/>
            <person name="Chain P."/>
            <person name="Malfatti S."/>
            <person name="Shin M."/>
            <person name="Vergez L."/>
            <person name="Schmutz J."/>
            <person name="Larimer F."/>
            <person name="Land M."/>
            <person name="Hauser L."/>
            <person name="Pelletier D.A."/>
            <person name="Kyrpides N."/>
            <person name="Anderson I."/>
            <person name="Oda Y."/>
            <person name="Harwood C.S."/>
            <person name="Richardson P."/>
        </authorList>
    </citation>
    <scope>NUCLEOTIDE SEQUENCE [LARGE SCALE GENOMIC DNA]</scope>
    <source>
        <strain>HaA2</strain>
    </source>
</reference>
<proteinExistence type="inferred from homology"/>
<comment type="function">
    <text evidence="1">F(1)F(0) ATP synthase produces ATP from ADP in the presence of a proton or sodium gradient. F-type ATPases consist of two structural domains, F(1) containing the extramembraneous catalytic core and F(0) containing the membrane proton channel, linked together by a central stalk and a peripheral stalk. During catalysis, ATP synthesis in the catalytic domain of F(1) is coupled via a rotary mechanism of the central stalk subunits to proton translocation (By similarity).</text>
</comment>
<comment type="function">
    <text evidence="1">Component of the F(0) channel, it forms part of the peripheral stalk, linking F(1) to F(0). The b'-subunit is a diverged and duplicated form of b found in plants and photosynthetic bacteria (By similarity).</text>
</comment>
<comment type="subunit">
    <text evidence="1">F-type ATPases have 2 components, F(1) - the catalytic core - and F(0) - the membrane proton channel. F(1) has five subunits: alpha(3), beta(3), gamma(1), delta(1), epsilon(1). F(0) has three main subunits: a(1), b(2) and c(10-14). The alpha and beta chains form an alternating ring which encloses part of the gamma chain. F(1) is attached to F(0) by a central stalk formed by the gamma and epsilon chains, while a peripheral stalk is formed by the delta and b chains (By similarity).</text>
</comment>
<comment type="subcellular location">
    <subcellularLocation>
        <location evidence="1">Cell inner membrane</location>
        <topology evidence="1">Single-pass membrane protein</topology>
    </subcellularLocation>
</comment>
<comment type="similarity">
    <text evidence="4">Belongs to the ATPase B chain family.</text>
</comment>
<feature type="chain" id="PRO_0000369043" description="ATP synthase subunit b 2">
    <location>
        <begin position="1"/>
        <end position="185"/>
    </location>
</feature>
<feature type="transmembrane region" description="Helical" evidence="2">
    <location>
        <begin position="32"/>
        <end position="51"/>
    </location>
</feature>
<feature type="region of interest" description="Disordered" evidence="3">
    <location>
        <begin position="1"/>
        <end position="23"/>
    </location>
</feature>
<feature type="compositionally biased region" description="Low complexity" evidence="3">
    <location>
        <begin position="9"/>
        <end position="18"/>
    </location>
</feature>
<evidence type="ECO:0000250" key="1"/>
<evidence type="ECO:0000255" key="2"/>
<evidence type="ECO:0000256" key="3">
    <source>
        <dbReference type="SAM" id="MobiDB-lite"/>
    </source>
</evidence>
<evidence type="ECO:0000305" key="4"/>
<keyword id="KW-0066">ATP synthesis</keyword>
<keyword id="KW-0997">Cell inner membrane</keyword>
<keyword id="KW-1003">Cell membrane</keyword>
<keyword id="KW-0138">CF(0)</keyword>
<keyword id="KW-0375">Hydrogen ion transport</keyword>
<keyword id="KW-0406">Ion transport</keyword>
<keyword id="KW-0472">Membrane</keyword>
<keyword id="KW-1185">Reference proteome</keyword>
<keyword id="KW-0812">Transmembrane</keyword>
<keyword id="KW-1133">Transmembrane helix</keyword>
<keyword id="KW-0813">Transport</keyword>
<organism>
    <name type="scientific">Rhodopseudomonas palustris (strain HaA2)</name>
    <dbReference type="NCBI Taxonomy" id="316058"/>
    <lineage>
        <taxon>Bacteria</taxon>
        <taxon>Pseudomonadati</taxon>
        <taxon>Pseudomonadota</taxon>
        <taxon>Alphaproteobacteria</taxon>
        <taxon>Hyphomicrobiales</taxon>
        <taxon>Nitrobacteraceae</taxon>
        <taxon>Rhodopseudomonas</taxon>
    </lineage>
</organism>
<dbReference type="EMBL" id="CP000250">
    <property type="protein sequence ID" value="ABD09256.1"/>
    <property type="molecule type" value="Genomic_DNA"/>
</dbReference>
<dbReference type="RefSeq" id="WP_011443438.1">
    <property type="nucleotide sequence ID" value="NC_007778.1"/>
</dbReference>
<dbReference type="SMR" id="Q2IRA4"/>
<dbReference type="STRING" id="316058.RPB_4573"/>
<dbReference type="KEGG" id="rpb:RPB_4573"/>
<dbReference type="eggNOG" id="COG0711">
    <property type="taxonomic scope" value="Bacteria"/>
</dbReference>
<dbReference type="HOGENOM" id="CLU_079215_1_2_5"/>
<dbReference type="OrthoDB" id="9805716at2"/>
<dbReference type="Proteomes" id="UP000008809">
    <property type="component" value="Chromosome"/>
</dbReference>
<dbReference type="GO" id="GO:0005886">
    <property type="term" value="C:plasma membrane"/>
    <property type="evidence" value="ECO:0007669"/>
    <property type="project" value="UniProtKB-SubCell"/>
</dbReference>
<dbReference type="GO" id="GO:0045259">
    <property type="term" value="C:proton-transporting ATP synthase complex"/>
    <property type="evidence" value="ECO:0007669"/>
    <property type="project" value="UniProtKB-KW"/>
</dbReference>
<dbReference type="GO" id="GO:0046933">
    <property type="term" value="F:proton-transporting ATP synthase activity, rotational mechanism"/>
    <property type="evidence" value="ECO:0007669"/>
    <property type="project" value="UniProtKB-UniRule"/>
</dbReference>
<dbReference type="GO" id="GO:0046961">
    <property type="term" value="F:proton-transporting ATPase activity, rotational mechanism"/>
    <property type="evidence" value="ECO:0007669"/>
    <property type="project" value="TreeGrafter"/>
</dbReference>
<dbReference type="CDD" id="cd06503">
    <property type="entry name" value="ATP-synt_Fo_b"/>
    <property type="match status" value="1"/>
</dbReference>
<dbReference type="HAMAP" id="MF_01398">
    <property type="entry name" value="ATP_synth_b_bprime"/>
    <property type="match status" value="1"/>
</dbReference>
<dbReference type="InterPro" id="IPR002146">
    <property type="entry name" value="ATP_synth_b/b'su_bac/chlpt"/>
</dbReference>
<dbReference type="InterPro" id="IPR050059">
    <property type="entry name" value="ATP_synthase_B_chain"/>
</dbReference>
<dbReference type="PANTHER" id="PTHR33445:SF1">
    <property type="entry name" value="ATP SYNTHASE SUBUNIT B"/>
    <property type="match status" value="1"/>
</dbReference>
<dbReference type="PANTHER" id="PTHR33445">
    <property type="entry name" value="ATP SYNTHASE SUBUNIT B', CHLOROPLASTIC"/>
    <property type="match status" value="1"/>
</dbReference>
<dbReference type="Pfam" id="PF00430">
    <property type="entry name" value="ATP-synt_B"/>
    <property type="match status" value="1"/>
</dbReference>